<gene>
    <name evidence="1" type="primary">ispDF</name>
    <name type="ordered locus">Rru_A1674</name>
</gene>
<sequence length="384" mass="40287">MAKVAALIVAAGRGKRFGGDLPKQYQTLGGRPILRHTLARFAAHPDVALVRAIIHPEDRDLYGAAAHGLATLLDAVEGGAERQDSVRLGLESLTDVAPDYVLIHDGARPLVDGALIDRVIAALADHPGAIPALAVADTLKRGAGGMIGQTVDRAGLWRAQTPQGFRYDAILAAHRAQAGTMLTDDAAVLEAAGGAVALVDGAEDNAKITTFADLERAERLFRGEGEQRIGSGFDVHRLGPGDFVTLNGIRIPHSHGLVGHSDADAPMHALTDALLGCLNAGDIGRHFPPSDMRWKGADSAIFLRHAAALITALGGRILNVDITILCEQPKIGPHRARMSARLAEILEISATRVAVKATTTEELGFTGRGEGIAAQATALITLPF</sequence>
<evidence type="ECO:0000255" key="1">
    <source>
        <dbReference type="HAMAP-Rule" id="MF_01520"/>
    </source>
</evidence>
<comment type="function">
    <text evidence="1">Bifunctional enzyme that catalyzes the formation of 4-diphosphocytidyl-2-C-methyl-D-erythritol from CTP and 2-C-methyl-D-erythritol 4-phosphate (MEP) (IspD), and catalyzes the conversion of 4-diphosphocytidyl-2-C-methyl-D-erythritol 2-phosphate (CDP-ME2P) to 2-C-methyl-D-erythritol 2,4-cyclodiphosphate (ME-CPP) with a corresponding release of cytidine 5-monophosphate (CMP) (IspF).</text>
</comment>
<comment type="catalytic activity">
    <reaction evidence="1">
        <text>2-C-methyl-D-erythritol 4-phosphate + CTP + H(+) = 4-CDP-2-C-methyl-D-erythritol + diphosphate</text>
        <dbReference type="Rhea" id="RHEA:13429"/>
        <dbReference type="ChEBI" id="CHEBI:15378"/>
        <dbReference type="ChEBI" id="CHEBI:33019"/>
        <dbReference type="ChEBI" id="CHEBI:37563"/>
        <dbReference type="ChEBI" id="CHEBI:57823"/>
        <dbReference type="ChEBI" id="CHEBI:58262"/>
        <dbReference type="EC" id="2.7.7.60"/>
    </reaction>
</comment>
<comment type="catalytic activity">
    <reaction evidence="1">
        <text>4-CDP-2-C-methyl-D-erythritol 2-phosphate = 2-C-methyl-D-erythritol 2,4-cyclic diphosphate + CMP</text>
        <dbReference type="Rhea" id="RHEA:23864"/>
        <dbReference type="ChEBI" id="CHEBI:57919"/>
        <dbReference type="ChEBI" id="CHEBI:58483"/>
        <dbReference type="ChEBI" id="CHEBI:60377"/>
        <dbReference type="EC" id="4.6.1.12"/>
    </reaction>
</comment>
<comment type="cofactor">
    <cofactor evidence="1">
        <name>a divalent metal cation</name>
        <dbReference type="ChEBI" id="CHEBI:60240"/>
    </cofactor>
</comment>
<comment type="pathway">
    <text evidence="1">Isoprenoid biosynthesis; isopentenyl diphosphate biosynthesis via DXP pathway; isopentenyl diphosphate from 1-deoxy-D-xylulose 5-phosphate: step 2/6.</text>
</comment>
<comment type="pathway">
    <text evidence="1">Isoprenoid biosynthesis; isopentenyl diphosphate biosynthesis via DXP pathway; isopentenyl diphosphate from 1-deoxy-D-xylulose 5-phosphate: step 4/6.</text>
</comment>
<comment type="similarity">
    <text evidence="1">In the N-terminal section; belongs to the IspD/TarI cytidylyltransferase family. IspD subfamily.</text>
</comment>
<comment type="similarity">
    <text evidence="1">In the C-terminal section; belongs to the IspF family.</text>
</comment>
<feature type="chain" id="PRO_0000292860" description="Bifunctional enzyme IspD/IspF">
    <location>
        <begin position="1"/>
        <end position="384"/>
    </location>
</feature>
<feature type="region of interest" description="2-C-methyl-D-erythritol 4-phosphate cytidylyltransferase" evidence="1">
    <location>
        <begin position="1"/>
        <end position="228"/>
    </location>
</feature>
<feature type="region of interest" description="2-C-methyl-D-erythritol 4-phosphate cytidylyltransferase">
    <location>
        <begin position="1"/>
        <end position="227"/>
    </location>
</feature>
<feature type="region of interest" description="2-C-methyl-D-erythritol 2,4-cyclodiphosphate synthase" evidence="1">
    <location>
        <begin position="228"/>
        <end position="384"/>
    </location>
</feature>
<feature type="binding site" evidence="1">
    <location>
        <begin position="234"/>
        <end position="236"/>
    </location>
    <ligand>
        <name>4-CDP-2-C-methyl-D-erythritol 2-phosphate</name>
        <dbReference type="ChEBI" id="CHEBI:57919"/>
    </ligand>
</feature>
<feature type="binding site" evidence="1">
    <location>
        <position position="234"/>
    </location>
    <ligand>
        <name>a divalent metal cation</name>
        <dbReference type="ChEBI" id="CHEBI:60240"/>
    </ligand>
</feature>
<feature type="binding site" evidence="1">
    <location>
        <position position="236"/>
    </location>
    <ligand>
        <name>a divalent metal cation</name>
        <dbReference type="ChEBI" id="CHEBI:60240"/>
    </ligand>
</feature>
<feature type="binding site" evidence="1">
    <location>
        <begin position="260"/>
        <end position="261"/>
    </location>
    <ligand>
        <name>4-CDP-2-C-methyl-D-erythritol 2-phosphate</name>
        <dbReference type="ChEBI" id="CHEBI:57919"/>
    </ligand>
</feature>
<feature type="binding site" evidence="1">
    <location>
        <position position="268"/>
    </location>
    <ligand>
        <name>a divalent metal cation</name>
        <dbReference type="ChEBI" id="CHEBI:60240"/>
    </ligand>
</feature>
<feature type="binding site" evidence="1">
    <location>
        <begin position="282"/>
        <end position="284"/>
    </location>
    <ligand>
        <name>4-CDP-2-C-methyl-D-erythritol 2-phosphate</name>
        <dbReference type="ChEBI" id="CHEBI:57919"/>
    </ligand>
</feature>
<feature type="binding site" evidence="1">
    <location>
        <begin position="358"/>
        <end position="361"/>
    </location>
    <ligand>
        <name>4-CDP-2-C-methyl-D-erythritol 2-phosphate</name>
        <dbReference type="ChEBI" id="CHEBI:57919"/>
    </ligand>
</feature>
<feature type="binding site" evidence="1">
    <location>
        <position position="365"/>
    </location>
    <ligand>
        <name>4-CDP-2-C-methyl-D-erythritol 2-phosphate</name>
        <dbReference type="ChEBI" id="CHEBI:57919"/>
    </ligand>
</feature>
<feature type="binding site" evidence="1">
    <location>
        <position position="368"/>
    </location>
    <ligand>
        <name>4-CDP-2-C-methyl-D-erythritol 2-phosphate</name>
        <dbReference type="ChEBI" id="CHEBI:57919"/>
    </ligand>
</feature>
<feature type="site" description="Transition state stabilizer" evidence="1">
    <location>
        <position position="16"/>
    </location>
</feature>
<feature type="site" description="Transition state stabilizer" evidence="1">
    <location>
        <position position="23"/>
    </location>
</feature>
<feature type="site" description="Positions MEP for the nucleophilic attack" evidence="1">
    <location>
        <position position="153"/>
    </location>
</feature>
<feature type="site" description="Positions MEP for the nucleophilic attack" evidence="1">
    <location>
        <position position="207"/>
    </location>
</feature>
<feature type="site" description="Transition state stabilizer" evidence="1">
    <location>
        <position position="260"/>
    </location>
</feature>
<feature type="site" description="Transition state stabilizer" evidence="1">
    <location>
        <position position="359"/>
    </location>
</feature>
<accession>Q2RTS1</accession>
<reference key="1">
    <citation type="journal article" date="2011" name="Stand. Genomic Sci.">
        <title>Complete genome sequence of Rhodospirillum rubrum type strain (S1).</title>
        <authorList>
            <person name="Munk A.C."/>
            <person name="Copeland A."/>
            <person name="Lucas S."/>
            <person name="Lapidus A."/>
            <person name="Del Rio T.G."/>
            <person name="Barry K."/>
            <person name="Detter J.C."/>
            <person name="Hammon N."/>
            <person name="Israni S."/>
            <person name="Pitluck S."/>
            <person name="Brettin T."/>
            <person name="Bruce D."/>
            <person name="Han C."/>
            <person name="Tapia R."/>
            <person name="Gilna P."/>
            <person name="Schmutz J."/>
            <person name="Larimer F."/>
            <person name="Land M."/>
            <person name="Kyrpides N.C."/>
            <person name="Mavromatis K."/>
            <person name="Richardson P."/>
            <person name="Rohde M."/>
            <person name="Goeker M."/>
            <person name="Klenk H.P."/>
            <person name="Zhang Y."/>
            <person name="Roberts G.P."/>
            <person name="Reslewic S."/>
            <person name="Schwartz D.C."/>
        </authorList>
    </citation>
    <scope>NUCLEOTIDE SEQUENCE [LARGE SCALE GENOMIC DNA]</scope>
    <source>
        <strain>ATCC 11170 / ATH 1.1.1 / DSM 467 / LMG 4362 / NCIMB 8255 / S1</strain>
    </source>
</reference>
<organism>
    <name type="scientific">Rhodospirillum rubrum (strain ATCC 11170 / ATH 1.1.1 / DSM 467 / LMG 4362 / NCIMB 8255 / S1)</name>
    <dbReference type="NCBI Taxonomy" id="269796"/>
    <lineage>
        <taxon>Bacteria</taxon>
        <taxon>Pseudomonadati</taxon>
        <taxon>Pseudomonadota</taxon>
        <taxon>Alphaproteobacteria</taxon>
        <taxon>Rhodospirillales</taxon>
        <taxon>Rhodospirillaceae</taxon>
        <taxon>Rhodospirillum</taxon>
    </lineage>
</organism>
<dbReference type="EC" id="2.7.7.60" evidence="1"/>
<dbReference type="EC" id="4.6.1.12" evidence="1"/>
<dbReference type="EMBL" id="CP000230">
    <property type="protein sequence ID" value="ABC22474.1"/>
    <property type="molecule type" value="Genomic_DNA"/>
</dbReference>
<dbReference type="RefSeq" id="WP_011389364.1">
    <property type="nucleotide sequence ID" value="NC_007643.1"/>
</dbReference>
<dbReference type="RefSeq" id="YP_426761.1">
    <property type="nucleotide sequence ID" value="NC_007643.1"/>
</dbReference>
<dbReference type="SMR" id="Q2RTS1"/>
<dbReference type="STRING" id="269796.Rru_A1674"/>
<dbReference type="EnsemblBacteria" id="ABC22474">
    <property type="protein sequence ID" value="ABC22474"/>
    <property type="gene ID" value="Rru_A1674"/>
</dbReference>
<dbReference type="KEGG" id="rru:Rru_A1674"/>
<dbReference type="PATRIC" id="fig|269796.9.peg.1752"/>
<dbReference type="eggNOG" id="COG0245">
    <property type="taxonomic scope" value="Bacteria"/>
</dbReference>
<dbReference type="eggNOG" id="COG1211">
    <property type="taxonomic scope" value="Bacteria"/>
</dbReference>
<dbReference type="HOGENOM" id="CLU_042800_2_5_5"/>
<dbReference type="PhylomeDB" id="Q2RTS1"/>
<dbReference type="UniPathway" id="UPA00056">
    <property type="reaction ID" value="UER00093"/>
</dbReference>
<dbReference type="UniPathway" id="UPA00056">
    <property type="reaction ID" value="UER00095"/>
</dbReference>
<dbReference type="Proteomes" id="UP000001929">
    <property type="component" value="Chromosome"/>
</dbReference>
<dbReference type="GO" id="GO:0008685">
    <property type="term" value="F:2-C-methyl-D-erythritol 2,4-cyclodiphosphate synthase activity"/>
    <property type="evidence" value="ECO:0007669"/>
    <property type="project" value="UniProtKB-UniRule"/>
</dbReference>
<dbReference type="GO" id="GO:0050518">
    <property type="term" value="F:2-C-methyl-D-erythritol 4-phosphate cytidylyltransferase activity"/>
    <property type="evidence" value="ECO:0007669"/>
    <property type="project" value="UniProtKB-UniRule"/>
</dbReference>
<dbReference type="GO" id="GO:0046872">
    <property type="term" value="F:metal ion binding"/>
    <property type="evidence" value="ECO:0007669"/>
    <property type="project" value="UniProtKB-KW"/>
</dbReference>
<dbReference type="GO" id="GO:0019288">
    <property type="term" value="P:isopentenyl diphosphate biosynthetic process, methylerythritol 4-phosphate pathway"/>
    <property type="evidence" value="ECO:0007669"/>
    <property type="project" value="UniProtKB-UniRule"/>
</dbReference>
<dbReference type="GO" id="GO:0016114">
    <property type="term" value="P:terpenoid biosynthetic process"/>
    <property type="evidence" value="ECO:0007669"/>
    <property type="project" value="InterPro"/>
</dbReference>
<dbReference type="CDD" id="cd02516">
    <property type="entry name" value="CDP-ME_synthetase"/>
    <property type="match status" value="1"/>
</dbReference>
<dbReference type="CDD" id="cd00554">
    <property type="entry name" value="MECDP_synthase"/>
    <property type="match status" value="1"/>
</dbReference>
<dbReference type="FunFam" id="3.90.550.10:FF:000003">
    <property type="entry name" value="2-C-methyl-D-erythritol 4-phosphate cytidylyltransferase"/>
    <property type="match status" value="1"/>
</dbReference>
<dbReference type="Gene3D" id="3.30.1330.50">
    <property type="entry name" value="2-C-methyl-D-erythritol 2,4-cyclodiphosphate synthase"/>
    <property type="match status" value="1"/>
</dbReference>
<dbReference type="Gene3D" id="3.90.550.10">
    <property type="entry name" value="Spore Coat Polysaccharide Biosynthesis Protein SpsA, Chain A"/>
    <property type="match status" value="1"/>
</dbReference>
<dbReference type="HAMAP" id="MF_00108">
    <property type="entry name" value="IspD"/>
    <property type="match status" value="1"/>
</dbReference>
<dbReference type="HAMAP" id="MF_01520">
    <property type="entry name" value="IspDF"/>
    <property type="match status" value="1"/>
</dbReference>
<dbReference type="HAMAP" id="MF_00107">
    <property type="entry name" value="IspF"/>
    <property type="match status" value="1"/>
</dbReference>
<dbReference type="InterPro" id="IPR001228">
    <property type="entry name" value="IspD"/>
</dbReference>
<dbReference type="InterPro" id="IPR026596">
    <property type="entry name" value="IspD/F"/>
</dbReference>
<dbReference type="InterPro" id="IPR034683">
    <property type="entry name" value="IspD/TarI"/>
</dbReference>
<dbReference type="InterPro" id="IPR018294">
    <property type="entry name" value="ISPD_synthase_CS"/>
</dbReference>
<dbReference type="InterPro" id="IPR003526">
    <property type="entry name" value="MECDP_synthase"/>
</dbReference>
<dbReference type="InterPro" id="IPR036571">
    <property type="entry name" value="MECDP_synthase_sf"/>
</dbReference>
<dbReference type="InterPro" id="IPR029044">
    <property type="entry name" value="Nucleotide-diphossugar_trans"/>
</dbReference>
<dbReference type="NCBIfam" id="TIGR00453">
    <property type="entry name" value="ispD"/>
    <property type="match status" value="1"/>
</dbReference>
<dbReference type="NCBIfam" id="TIGR00151">
    <property type="entry name" value="ispF"/>
    <property type="match status" value="1"/>
</dbReference>
<dbReference type="NCBIfam" id="NF006899">
    <property type="entry name" value="PRK09382.1"/>
    <property type="match status" value="1"/>
</dbReference>
<dbReference type="PANTHER" id="PTHR43181">
    <property type="entry name" value="2-C-METHYL-D-ERYTHRITOL 2,4-CYCLODIPHOSPHATE SYNTHASE, CHLOROPLASTIC"/>
    <property type="match status" value="1"/>
</dbReference>
<dbReference type="PANTHER" id="PTHR43181:SF1">
    <property type="entry name" value="2-C-METHYL-D-ERYTHRITOL 2,4-CYCLODIPHOSPHATE SYNTHASE, CHLOROPLASTIC"/>
    <property type="match status" value="1"/>
</dbReference>
<dbReference type="Pfam" id="PF01128">
    <property type="entry name" value="IspD"/>
    <property type="match status" value="1"/>
</dbReference>
<dbReference type="Pfam" id="PF02542">
    <property type="entry name" value="YgbB"/>
    <property type="match status" value="1"/>
</dbReference>
<dbReference type="SUPFAM" id="SSF69765">
    <property type="entry name" value="IpsF-like"/>
    <property type="match status" value="1"/>
</dbReference>
<dbReference type="SUPFAM" id="SSF53448">
    <property type="entry name" value="Nucleotide-diphospho-sugar transferases"/>
    <property type="match status" value="1"/>
</dbReference>
<dbReference type="PROSITE" id="PS01295">
    <property type="entry name" value="ISPD"/>
    <property type="match status" value="1"/>
</dbReference>
<name>ISPDF_RHORT</name>
<protein>
    <recommendedName>
        <fullName evidence="1">Bifunctional enzyme IspD/IspF</fullName>
    </recommendedName>
    <domain>
        <recommendedName>
            <fullName evidence="1">2-C-methyl-D-erythritol 4-phosphate cytidylyltransferase</fullName>
            <ecNumber evidence="1">2.7.7.60</ecNumber>
        </recommendedName>
        <alternativeName>
            <fullName evidence="1">4-diphosphocytidyl-2C-methyl-D-erythritol synthase</fullName>
        </alternativeName>
        <alternativeName>
            <fullName evidence="1">MEP cytidylyltransferase</fullName>
            <shortName evidence="1">MCT</shortName>
        </alternativeName>
    </domain>
    <domain>
        <recommendedName>
            <fullName evidence="1">2-C-methyl-D-erythritol 2,4-cyclodiphosphate synthase</fullName>
            <shortName evidence="1">MECDP-synthase</shortName>
            <shortName evidence="1">MECPP-synthase</shortName>
            <shortName evidence="1">MECPS</shortName>
            <ecNumber evidence="1">4.6.1.12</ecNumber>
        </recommendedName>
    </domain>
</protein>
<keyword id="KW-0414">Isoprene biosynthesis</keyword>
<keyword id="KW-0456">Lyase</keyword>
<keyword id="KW-0479">Metal-binding</keyword>
<keyword id="KW-0511">Multifunctional enzyme</keyword>
<keyword id="KW-0548">Nucleotidyltransferase</keyword>
<keyword id="KW-1185">Reference proteome</keyword>
<keyword id="KW-0808">Transferase</keyword>
<proteinExistence type="inferred from homology"/>